<feature type="chain" id="PRO_0000144597" description="A-type ATP synthase subunit A">
    <location>
        <begin position="1"/>
        <end position="578"/>
    </location>
</feature>
<feature type="binding site" evidence="1">
    <location>
        <begin position="228"/>
        <end position="235"/>
    </location>
    <ligand>
        <name>ATP</name>
        <dbReference type="ChEBI" id="CHEBI:30616"/>
    </ligand>
</feature>
<gene>
    <name evidence="1" type="primary">atpA</name>
</gene>
<name>AATA_METBA</name>
<accession>P22662</accession>
<reference key="1">
    <citation type="journal article" date="1989" name="J. Biol. Chem.">
        <title>Amino acid sequence of the alpha and beta subunits of Methanosarcina barkeri ATPase deduced from cloned genes. Similarity to subunits of eukaryotic vacuolar and F0F1-ATPases.</title>
        <authorList>
            <person name="Inatomi K."/>
            <person name="Eya S."/>
            <person name="Maeda M."/>
            <person name="Futai M."/>
        </authorList>
    </citation>
    <scope>NUCLEOTIDE SEQUENCE [GENOMIC DNA]</scope>
</reference>
<proteinExistence type="inferred from homology"/>
<dbReference type="EC" id="7.1.2.2" evidence="1"/>
<dbReference type="EMBL" id="J04836">
    <property type="protein sequence ID" value="AAA72215.1"/>
    <property type="molecule type" value="Genomic_DNA"/>
</dbReference>
<dbReference type="PIR" id="A34283">
    <property type="entry name" value="A34283"/>
</dbReference>
<dbReference type="SMR" id="P22662"/>
<dbReference type="GO" id="GO:0005886">
    <property type="term" value="C:plasma membrane"/>
    <property type="evidence" value="ECO:0007669"/>
    <property type="project" value="UniProtKB-SubCell"/>
</dbReference>
<dbReference type="GO" id="GO:0033178">
    <property type="term" value="C:proton-transporting two-sector ATPase complex, catalytic domain"/>
    <property type="evidence" value="ECO:0007669"/>
    <property type="project" value="InterPro"/>
</dbReference>
<dbReference type="GO" id="GO:0005524">
    <property type="term" value="F:ATP binding"/>
    <property type="evidence" value="ECO:0007669"/>
    <property type="project" value="UniProtKB-UniRule"/>
</dbReference>
<dbReference type="GO" id="GO:0046933">
    <property type="term" value="F:proton-transporting ATP synthase activity, rotational mechanism"/>
    <property type="evidence" value="ECO:0007669"/>
    <property type="project" value="UniProtKB-UniRule"/>
</dbReference>
<dbReference type="GO" id="GO:0046961">
    <property type="term" value="F:proton-transporting ATPase activity, rotational mechanism"/>
    <property type="evidence" value="ECO:0007669"/>
    <property type="project" value="InterPro"/>
</dbReference>
<dbReference type="GO" id="GO:0042777">
    <property type="term" value="P:proton motive force-driven plasma membrane ATP synthesis"/>
    <property type="evidence" value="ECO:0007669"/>
    <property type="project" value="UniProtKB-UniRule"/>
</dbReference>
<dbReference type="CDD" id="cd18111">
    <property type="entry name" value="ATP-synt_V_A-type_alpha_C"/>
    <property type="match status" value="1"/>
</dbReference>
<dbReference type="CDD" id="cd18119">
    <property type="entry name" value="ATP-synt_V_A-type_alpha_N"/>
    <property type="match status" value="1"/>
</dbReference>
<dbReference type="CDD" id="cd01134">
    <property type="entry name" value="V_A-ATPase_A"/>
    <property type="match status" value="1"/>
</dbReference>
<dbReference type="FunFam" id="3.40.50.300:FF:000675">
    <property type="entry name" value="V-type ATP synthase alpha chain"/>
    <property type="match status" value="1"/>
</dbReference>
<dbReference type="FunFam" id="1.10.1140.10:FF:000002">
    <property type="entry name" value="V-type proton ATPase catalytic subunit A"/>
    <property type="match status" value="1"/>
</dbReference>
<dbReference type="FunFam" id="2.40.50.100:FF:000008">
    <property type="entry name" value="V-type proton ATPase catalytic subunit A"/>
    <property type="match status" value="1"/>
</dbReference>
<dbReference type="Gene3D" id="2.40.30.20">
    <property type="match status" value="1"/>
</dbReference>
<dbReference type="Gene3D" id="2.40.50.100">
    <property type="match status" value="1"/>
</dbReference>
<dbReference type="Gene3D" id="1.10.1140.10">
    <property type="entry name" value="Bovine Mitochondrial F1-atpase, Atp Synthase Beta Chain, Chain D, domain 3"/>
    <property type="match status" value="1"/>
</dbReference>
<dbReference type="Gene3D" id="3.40.50.300">
    <property type="entry name" value="P-loop containing nucleotide triphosphate hydrolases"/>
    <property type="match status" value="1"/>
</dbReference>
<dbReference type="HAMAP" id="MF_00309">
    <property type="entry name" value="ATP_synth_A_arch"/>
    <property type="match status" value="1"/>
</dbReference>
<dbReference type="InterPro" id="IPR055190">
    <property type="entry name" value="ATP-synt_VA_C"/>
</dbReference>
<dbReference type="InterPro" id="IPR031686">
    <property type="entry name" value="ATP-synth_a_Xtn"/>
</dbReference>
<dbReference type="InterPro" id="IPR023366">
    <property type="entry name" value="ATP_synth_asu-like_sf"/>
</dbReference>
<dbReference type="InterPro" id="IPR005726">
    <property type="entry name" value="ATP_synth_asu_arc"/>
</dbReference>
<dbReference type="InterPro" id="IPR020003">
    <property type="entry name" value="ATPase_a/bsu_AS"/>
</dbReference>
<dbReference type="InterPro" id="IPR004100">
    <property type="entry name" value="ATPase_F1/V1/A1_a/bsu_N"/>
</dbReference>
<dbReference type="InterPro" id="IPR036121">
    <property type="entry name" value="ATPase_F1/V1/A1_a/bsu_N_sf"/>
</dbReference>
<dbReference type="InterPro" id="IPR000194">
    <property type="entry name" value="ATPase_F1/V1/A1_a/bsu_nucl-bd"/>
</dbReference>
<dbReference type="InterPro" id="IPR024034">
    <property type="entry name" value="ATPase_F1/V1_b/a_C"/>
</dbReference>
<dbReference type="InterPro" id="IPR027417">
    <property type="entry name" value="P-loop_NTPase"/>
</dbReference>
<dbReference type="InterPro" id="IPR022878">
    <property type="entry name" value="V-ATPase_asu"/>
</dbReference>
<dbReference type="NCBIfam" id="TIGR01043">
    <property type="entry name" value="ATP_syn_A_arch"/>
    <property type="match status" value="1"/>
</dbReference>
<dbReference type="NCBIfam" id="NF003220">
    <property type="entry name" value="PRK04192.1"/>
    <property type="match status" value="1"/>
</dbReference>
<dbReference type="PANTHER" id="PTHR43607:SF1">
    <property type="entry name" value="H(+)-TRANSPORTING TWO-SECTOR ATPASE"/>
    <property type="match status" value="1"/>
</dbReference>
<dbReference type="PANTHER" id="PTHR43607">
    <property type="entry name" value="V-TYPE PROTON ATPASE CATALYTIC SUBUNIT A"/>
    <property type="match status" value="1"/>
</dbReference>
<dbReference type="Pfam" id="PF00006">
    <property type="entry name" value="ATP-synt_ab"/>
    <property type="match status" value="1"/>
</dbReference>
<dbReference type="Pfam" id="PF02874">
    <property type="entry name" value="ATP-synt_ab_N"/>
    <property type="match status" value="1"/>
</dbReference>
<dbReference type="Pfam" id="PF16886">
    <property type="entry name" value="ATP-synt_ab_Xtn"/>
    <property type="match status" value="1"/>
</dbReference>
<dbReference type="Pfam" id="PF22919">
    <property type="entry name" value="ATP-synt_VA_C"/>
    <property type="match status" value="1"/>
</dbReference>
<dbReference type="SUPFAM" id="SSF47917">
    <property type="entry name" value="C-terminal domain of alpha and beta subunits of F1 ATP synthase"/>
    <property type="match status" value="1"/>
</dbReference>
<dbReference type="SUPFAM" id="SSF50615">
    <property type="entry name" value="N-terminal domain of alpha and beta subunits of F1 ATP synthase"/>
    <property type="match status" value="1"/>
</dbReference>
<dbReference type="SUPFAM" id="SSF52540">
    <property type="entry name" value="P-loop containing nucleoside triphosphate hydrolases"/>
    <property type="match status" value="1"/>
</dbReference>
<dbReference type="PROSITE" id="PS00152">
    <property type="entry name" value="ATPASE_ALPHA_BETA"/>
    <property type="match status" value="1"/>
</dbReference>
<protein>
    <recommendedName>
        <fullName evidence="1">A-type ATP synthase subunit A</fullName>
        <ecNumber evidence="1">7.1.2.2</ecNumber>
    </recommendedName>
</protein>
<keyword id="KW-0066">ATP synthesis</keyword>
<keyword id="KW-0067">ATP-binding</keyword>
<keyword id="KW-1003">Cell membrane</keyword>
<keyword id="KW-0375">Hydrogen ion transport</keyword>
<keyword id="KW-0406">Ion transport</keyword>
<keyword id="KW-0472">Membrane</keyword>
<keyword id="KW-0547">Nucleotide-binding</keyword>
<keyword id="KW-1278">Translocase</keyword>
<keyword id="KW-0813">Transport</keyword>
<organism>
    <name type="scientific">Methanosarcina barkeri</name>
    <dbReference type="NCBI Taxonomy" id="2208"/>
    <lineage>
        <taxon>Archaea</taxon>
        <taxon>Methanobacteriati</taxon>
        <taxon>Methanobacteriota</taxon>
        <taxon>Stenosarchaea group</taxon>
        <taxon>Methanomicrobia</taxon>
        <taxon>Methanosarcinales</taxon>
        <taxon>Methanosarcinaceae</taxon>
        <taxon>Methanosarcina</taxon>
    </lineage>
</organism>
<sequence>MEVKGEIYRVSGPVVTAIGLQAKMYDLVKVGNEGLMGEVIQILGPKTIIQVYEETAGIKPGEPCVSTGSSLSVELGPGLLSSIYDGVQRPLHVLLEKMGSFIQRGVSADGLDHKKLWDFKPIVKKGDSVKGGDVIGVVQETVNIEHKIMVPPDISGTISDIKSGNFTVVDTICTLTDGTELQMMQRWPVRRPRPVKAKLTPTRPLVTGMRILDGLFPVAKGGTAAIPGPFGSGKTVTQQSLAKWSDTEIVVYIGCGERGNEMADVLSEFPELEDPQTGRPLMERTVLIANTSNMPVAAREASVYTGITIAEYYRDMGLDVSLMADSTSRWAEAMREISSRLEEMPGEEGYPAYLSARLAEFYERAGVAESLCGETGSITVIGAVSPPGGDFSEPVTQNTLRIVKVFWALDAKLSQRRHFPAINWLNSYSLYKDSLNDWFADNVAPDYVPLRERAMEMLQTESELQEIVQLVGSDALPDDQQLLLEITRMLREIFLQQNAFHPVDAYSPFDQQYKILKAIMKWGDAAMDALKSGVPVTEIIKLESKNVLAKVKYEEKFDESMNAVLAQMDKEFASLRGR</sequence>
<evidence type="ECO:0000255" key="1">
    <source>
        <dbReference type="HAMAP-Rule" id="MF_00309"/>
    </source>
</evidence>
<comment type="function">
    <text>Produces ATP from ADP in the presence of a proton gradient across the membrane. The archaeal alpha chain is a catalytic subunit.</text>
</comment>
<comment type="function">
    <text evidence="1">Component of the A-type ATP synthase that produces ATP from ADP in the presence of a proton gradient across the membrane. The A chain is the catalytic subunit.</text>
</comment>
<comment type="catalytic activity">
    <reaction evidence="1">
        <text>ATP + H2O + 4 H(+)(in) = ADP + phosphate + 5 H(+)(out)</text>
        <dbReference type="Rhea" id="RHEA:57720"/>
        <dbReference type="ChEBI" id="CHEBI:15377"/>
        <dbReference type="ChEBI" id="CHEBI:15378"/>
        <dbReference type="ChEBI" id="CHEBI:30616"/>
        <dbReference type="ChEBI" id="CHEBI:43474"/>
        <dbReference type="ChEBI" id="CHEBI:456216"/>
        <dbReference type="EC" id="7.1.2.2"/>
    </reaction>
</comment>
<comment type="subunit">
    <text evidence="1">Has multiple subunits with at least A(3), B(3), C, D, E, F, H, I and proteolipid K(x).</text>
</comment>
<comment type="subcellular location">
    <subcellularLocation>
        <location evidence="1">Cell membrane</location>
        <topology evidence="1">Peripheral membrane protein</topology>
    </subcellularLocation>
</comment>
<comment type="similarity">
    <text evidence="1">Belongs to the ATPase alpha/beta chains family.</text>
</comment>